<evidence type="ECO:0000255" key="1">
    <source>
        <dbReference type="HAMAP-Rule" id="MF_01026"/>
    </source>
</evidence>
<evidence type="ECO:0000256" key="2">
    <source>
        <dbReference type="SAM" id="MobiDB-lite"/>
    </source>
</evidence>
<accession>B1VZ03</accession>
<gene>
    <name evidence="1" type="primary">leuC</name>
    <name type="ordered locus">SGR_1929</name>
</gene>
<protein>
    <recommendedName>
        <fullName evidence="1">3-isopropylmalate dehydratase large subunit</fullName>
        <ecNumber evidence="1">4.2.1.33</ecNumber>
    </recommendedName>
    <alternativeName>
        <fullName evidence="1">Alpha-IPM isomerase</fullName>
        <shortName evidence="1">IPMI</shortName>
    </alternativeName>
    <alternativeName>
        <fullName evidence="1">Isopropylmalate isomerase</fullName>
    </alternativeName>
</protein>
<keyword id="KW-0004">4Fe-4S</keyword>
<keyword id="KW-0028">Amino-acid biosynthesis</keyword>
<keyword id="KW-0100">Branched-chain amino acid biosynthesis</keyword>
<keyword id="KW-0408">Iron</keyword>
<keyword id="KW-0411">Iron-sulfur</keyword>
<keyword id="KW-0432">Leucine biosynthesis</keyword>
<keyword id="KW-0456">Lyase</keyword>
<keyword id="KW-0479">Metal-binding</keyword>
<organism>
    <name type="scientific">Streptomyces griseus subsp. griseus (strain JCM 4626 / CBS 651.72 / NBRC 13350 / KCC S-0626 / ISP 5235)</name>
    <dbReference type="NCBI Taxonomy" id="455632"/>
    <lineage>
        <taxon>Bacteria</taxon>
        <taxon>Bacillati</taxon>
        <taxon>Actinomycetota</taxon>
        <taxon>Actinomycetes</taxon>
        <taxon>Kitasatosporales</taxon>
        <taxon>Streptomycetaceae</taxon>
        <taxon>Streptomyces</taxon>
    </lineage>
</organism>
<sequence length="475" mass="50474">MGRTLAEKVWDDHVVRRAEGEPDLLFIDLHLLHEVTSPQAFDGLRQAGRPVRRLDLTIATEDHNTPTLDIDKPIADPVSRAQLETLRKNCADFGVRLHPLGDVEQGVVHVVGPQLGLTQPGTTVVCGDSHTSTHGAFGALAFGIGTSQVEHVLATQTLPLARPKTMAITVEGELPDEVTAKDLILAIIARIGTGGGQGYILEYRGSAIEKLSMEARMTICNMSIEAGARAGMIAPDATTFDYLEGRDHAPRGEDWDAAVAYWKTLRSDDDAVFDAEVVIDAAELAPFVTWGTNPGQGAPLSANVPDPASYEDASERFAAEKALEYMGLTAGQALRDINVDTVFVGSCTNGRIEDLRNAAAVLDGRKVADGVRMLIVPGSVRVALQAVAEGLDKVFTEAGAEWRHAGCSMCLGMNPDQLAPGERSASTSNRNFEGRQGKGGRTHLVSPQVAAATAVLGHLASPADLSDTRTPAGVR</sequence>
<name>LEUC_STRGG</name>
<proteinExistence type="inferred from homology"/>
<feature type="chain" id="PRO_1000135717" description="3-isopropylmalate dehydratase large subunit">
    <location>
        <begin position="1"/>
        <end position="475"/>
    </location>
</feature>
<feature type="region of interest" description="Disordered" evidence="2">
    <location>
        <begin position="418"/>
        <end position="442"/>
    </location>
</feature>
<feature type="binding site" evidence="1">
    <location>
        <position position="347"/>
    </location>
    <ligand>
        <name>[4Fe-4S] cluster</name>
        <dbReference type="ChEBI" id="CHEBI:49883"/>
    </ligand>
</feature>
<feature type="binding site" evidence="1">
    <location>
        <position position="407"/>
    </location>
    <ligand>
        <name>[4Fe-4S] cluster</name>
        <dbReference type="ChEBI" id="CHEBI:49883"/>
    </ligand>
</feature>
<feature type="binding site" evidence="1">
    <location>
        <position position="410"/>
    </location>
    <ligand>
        <name>[4Fe-4S] cluster</name>
        <dbReference type="ChEBI" id="CHEBI:49883"/>
    </ligand>
</feature>
<comment type="function">
    <text evidence="1">Catalyzes the isomerization between 2-isopropylmalate and 3-isopropylmalate, via the formation of 2-isopropylmaleate.</text>
</comment>
<comment type="catalytic activity">
    <reaction evidence="1">
        <text>(2R,3S)-3-isopropylmalate = (2S)-2-isopropylmalate</text>
        <dbReference type="Rhea" id="RHEA:32287"/>
        <dbReference type="ChEBI" id="CHEBI:1178"/>
        <dbReference type="ChEBI" id="CHEBI:35121"/>
        <dbReference type="EC" id="4.2.1.33"/>
    </reaction>
</comment>
<comment type="cofactor">
    <cofactor evidence="1">
        <name>[4Fe-4S] cluster</name>
        <dbReference type="ChEBI" id="CHEBI:49883"/>
    </cofactor>
    <text evidence="1">Binds 1 [4Fe-4S] cluster per subunit.</text>
</comment>
<comment type="pathway">
    <text evidence="1">Amino-acid biosynthesis; L-leucine biosynthesis; L-leucine from 3-methyl-2-oxobutanoate: step 2/4.</text>
</comment>
<comment type="subunit">
    <text evidence="1">Heterodimer of LeuC and LeuD.</text>
</comment>
<comment type="similarity">
    <text evidence="1">Belongs to the aconitase/IPM isomerase family. LeuC type 1 subfamily.</text>
</comment>
<reference key="1">
    <citation type="journal article" date="2008" name="J. Bacteriol.">
        <title>Genome sequence of the streptomycin-producing microorganism Streptomyces griseus IFO 13350.</title>
        <authorList>
            <person name="Ohnishi Y."/>
            <person name="Ishikawa J."/>
            <person name="Hara H."/>
            <person name="Suzuki H."/>
            <person name="Ikenoya M."/>
            <person name="Ikeda H."/>
            <person name="Yamashita A."/>
            <person name="Hattori M."/>
            <person name="Horinouchi S."/>
        </authorList>
    </citation>
    <scope>NUCLEOTIDE SEQUENCE [LARGE SCALE GENOMIC DNA]</scope>
    <source>
        <strain>JCM 4626 / CBS 651.72 / NBRC 13350 / KCC S-0626 / ISP 5235</strain>
    </source>
</reference>
<dbReference type="EC" id="4.2.1.33" evidence="1"/>
<dbReference type="EMBL" id="AP009493">
    <property type="protein sequence ID" value="BAG18758.1"/>
    <property type="molecule type" value="Genomic_DNA"/>
</dbReference>
<dbReference type="RefSeq" id="WP_003966002.1">
    <property type="nucleotide sequence ID" value="NC_010572.1"/>
</dbReference>
<dbReference type="SMR" id="B1VZ03"/>
<dbReference type="KEGG" id="sgr:SGR_1929"/>
<dbReference type="eggNOG" id="COG0065">
    <property type="taxonomic scope" value="Bacteria"/>
</dbReference>
<dbReference type="HOGENOM" id="CLU_006714_3_4_11"/>
<dbReference type="UniPathway" id="UPA00048">
    <property type="reaction ID" value="UER00071"/>
</dbReference>
<dbReference type="Proteomes" id="UP000001685">
    <property type="component" value="Chromosome"/>
</dbReference>
<dbReference type="GO" id="GO:0003861">
    <property type="term" value="F:3-isopropylmalate dehydratase activity"/>
    <property type="evidence" value="ECO:0007669"/>
    <property type="project" value="UniProtKB-UniRule"/>
</dbReference>
<dbReference type="GO" id="GO:0051539">
    <property type="term" value="F:4 iron, 4 sulfur cluster binding"/>
    <property type="evidence" value="ECO:0007669"/>
    <property type="project" value="UniProtKB-KW"/>
</dbReference>
<dbReference type="GO" id="GO:0046872">
    <property type="term" value="F:metal ion binding"/>
    <property type="evidence" value="ECO:0007669"/>
    <property type="project" value="UniProtKB-KW"/>
</dbReference>
<dbReference type="GO" id="GO:0009098">
    <property type="term" value="P:L-leucine biosynthetic process"/>
    <property type="evidence" value="ECO:0007669"/>
    <property type="project" value="UniProtKB-UniRule"/>
</dbReference>
<dbReference type="CDD" id="cd01583">
    <property type="entry name" value="IPMI"/>
    <property type="match status" value="1"/>
</dbReference>
<dbReference type="FunFam" id="3.30.499.10:FF:000007">
    <property type="entry name" value="3-isopropylmalate dehydratase large subunit"/>
    <property type="match status" value="1"/>
</dbReference>
<dbReference type="Gene3D" id="3.30.499.10">
    <property type="entry name" value="Aconitase, domain 3"/>
    <property type="match status" value="2"/>
</dbReference>
<dbReference type="HAMAP" id="MF_01026">
    <property type="entry name" value="LeuC_type1"/>
    <property type="match status" value="1"/>
</dbReference>
<dbReference type="InterPro" id="IPR004430">
    <property type="entry name" value="3-IsopropMal_deHydase_lsu"/>
</dbReference>
<dbReference type="InterPro" id="IPR015931">
    <property type="entry name" value="Acnase/IPM_dHydase_lsu_aba_1/3"/>
</dbReference>
<dbReference type="InterPro" id="IPR001030">
    <property type="entry name" value="Acoase/IPM_deHydtase_lsu_aba"/>
</dbReference>
<dbReference type="InterPro" id="IPR018136">
    <property type="entry name" value="Aconitase_4Fe-4S_BS"/>
</dbReference>
<dbReference type="InterPro" id="IPR036008">
    <property type="entry name" value="Aconitase_4Fe-4S_dom"/>
</dbReference>
<dbReference type="InterPro" id="IPR050067">
    <property type="entry name" value="IPM_dehydratase_rel_enz"/>
</dbReference>
<dbReference type="InterPro" id="IPR033941">
    <property type="entry name" value="IPMI_cat"/>
</dbReference>
<dbReference type="NCBIfam" id="TIGR00170">
    <property type="entry name" value="leuC"/>
    <property type="match status" value="1"/>
</dbReference>
<dbReference type="NCBIfam" id="NF004016">
    <property type="entry name" value="PRK05478.1"/>
    <property type="match status" value="1"/>
</dbReference>
<dbReference type="NCBIfam" id="NF009116">
    <property type="entry name" value="PRK12466.1"/>
    <property type="match status" value="1"/>
</dbReference>
<dbReference type="PANTHER" id="PTHR43822:SF9">
    <property type="entry name" value="3-ISOPROPYLMALATE DEHYDRATASE"/>
    <property type="match status" value="1"/>
</dbReference>
<dbReference type="PANTHER" id="PTHR43822">
    <property type="entry name" value="HOMOACONITASE, MITOCHONDRIAL-RELATED"/>
    <property type="match status" value="1"/>
</dbReference>
<dbReference type="Pfam" id="PF00330">
    <property type="entry name" value="Aconitase"/>
    <property type="match status" value="1"/>
</dbReference>
<dbReference type="PRINTS" id="PR00415">
    <property type="entry name" value="ACONITASE"/>
</dbReference>
<dbReference type="SUPFAM" id="SSF53732">
    <property type="entry name" value="Aconitase iron-sulfur domain"/>
    <property type="match status" value="1"/>
</dbReference>
<dbReference type="PROSITE" id="PS00450">
    <property type="entry name" value="ACONITASE_1"/>
    <property type="match status" value="1"/>
</dbReference>
<dbReference type="PROSITE" id="PS01244">
    <property type="entry name" value="ACONITASE_2"/>
    <property type="match status" value="1"/>
</dbReference>